<comment type="function">
    <text evidence="1">Located at the top of the head of the 30S subunit, it contacts several helices of the 16S rRNA. In the 70S ribosome it contacts the 23S rRNA (bridge B1a) and protein L5 of the 50S subunit (bridge B1b), connecting the 2 subunits; these bridges are implicated in subunit movement. Contacts the tRNAs in the A and P-sites.</text>
</comment>
<comment type="subunit">
    <text evidence="1">Part of the 30S ribosomal subunit. Forms a loose heterodimer with protein S19. Forms two bridges to the 50S subunit in the 70S ribosome.</text>
</comment>
<comment type="similarity">
    <text evidence="1">Belongs to the universal ribosomal protein uS13 family.</text>
</comment>
<keyword id="KW-1185">Reference proteome</keyword>
<keyword id="KW-0687">Ribonucleoprotein</keyword>
<keyword id="KW-0689">Ribosomal protein</keyword>
<keyword id="KW-0694">RNA-binding</keyword>
<keyword id="KW-0699">rRNA-binding</keyword>
<keyword id="KW-0820">tRNA-binding</keyword>
<protein>
    <recommendedName>
        <fullName evidence="1">Small ribosomal subunit protein uS13</fullName>
    </recommendedName>
    <alternativeName>
        <fullName evidence="3">30S ribosomal protein S13</fullName>
    </alternativeName>
</protein>
<feature type="chain" id="PRO_1000165620" description="Small ribosomal subunit protein uS13">
    <location>
        <begin position="1"/>
        <end position="121"/>
    </location>
</feature>
<feature type="region of interest" description="Disordered" evidence="2">
    <location>
        <begin position="93"/>
        <end position="121"/>
    </location>
</feature>
<reference key="1">
    <citation type="submission" date="2009-01" db="EMBL/GenBank/DDBJ databases">
        <title>Complete sequence of Diaphorobacter sp. TPSY.</title>
        <authorList>
            <consortium name="US DOE Joint Genome Institute"/>
            <person name="Lucas S."/>
            <person name="Copeland A."/>
            <person name="Lapidus A."/>
            <person name="Glavina del Rio T."/>
            <person name="Tice H."/>
            <person name="Bruce D."/>
            <person name="Goodwin L."/>
            <person name="Pitluck S."/>
            <person name="Chertkov O."/>
            <person name="Brettin T."/>
            <person name="Detter J.C."/>
            <person name="Han C."/>
            <person name="Larimer F."/>
            <person name="Land M."/>
            <person name="Hauser L."/>
            <person name="Kyrpides N."/>
            <person name="Mikhailova N."/>
            <person name="Coates J.D."/>
        </authorList>
    </citation>
    <scope>NUCLEOTIDE SEQUENCE [LARGE SCALE GENOMIC DNA]</scope>
    <source>
        <strain>TPSY</strain>
    </source>
</reference>
<evidence type="ECO:0000255" key="1">
    <source>
        <dbReference type="HAMAP-Rule" id="MF_01315"/>
    </source>
</evidence>
<evidence type="ECO:0000256" key="2">
    <source>
        <dbReference type="SAM" id="MobiDB-lite"/>
    </source>
</evidence>
<evidence type="ECO:0000305" key="3"/>
<accession>B9MBV9</accession>
<sequence>MARIAGINIPPHQHTEIGLTAIYGIGRTRARKICEACGIAYSKKVKELTDADLEKIRDQIAQFTIEGDLRRETTMNIKRLMDIGCYRGFRHRRGLPMRGQRTRTNARTRKGPRKGAAALKK</sequence>
<dbReference type="EMBL" id="CP001392">
    <property type="protein sequence ID" value="ACM31879.1"/>
    <property type="molecule type" value="Genomic_DNA"/>
</dbReference>
<dbReference type="RefSeq" id="WP_011803864.1">
    <property type="nucleotide sequence ID" value="NC_011992.1"/>
</dbReference>
<dbReference type="SMR" id="B9MBV9"/>
<dbReference type="GeneID" id="84683091"/>
<dbReference type="KEGG" id="dia:Dtpsy_0395"/>
<dbReference type="eggNOG" id="COG0099">
    <property type="taxonomic scope" value="Bacteria"/>
</dbReference>
<dbReference type="HOGENOM" id="CLU_103849_1_2_4"/>
<dbReference type="Proteomes" id="UP000000450">
    <property type="component" value="Chromosome"/>
</dbReference>
<dbReference type="GO" id="GO:0005829">
    <property type="term" value="C:cytosol"/>
    <property type="evidence" value="ECO:0007669"/>
    <property type="project" value="TreeGrafter"/>
</dbReference>
<dbReference type="GO" id="GO:0015935">
    <property type="term" value="C:small ribosomal subunit"/>
    <property type="evidence" value="ECO:0007669"/>
    <property type="project" value="TreeGrafter"/>
</dbReference>
<dbReference type="GO" id="GO:0019843">
    <property type="term" value="F:rRNA binding"/>
    <property type="evidence" value="ECO:0007669"/>
    <property type="project" value="UniProtKB-UniRule"/>
</dbReference>
<dbReference type="GO" id="GO:0003735">
    <property type="term" value="F:structural constituent of ribosome"/>
    <property type="evidence" value="ECO:0007669"/>
    <property type="project" value="InterPro"/>
</dbReference>
<dbReference type="GO" id="GO:0000049">
    <property type="term" value="F:tRNA binding"/>
    <property type="evidence" value="ECO:0007669"/>
    <property type="project" value="UniProtKB-UniRule"/>
</dbReference>
<dbReference type="GO" id="GO:0006412">
    <property type="term" value="P:translation"/>
    <property type="evidence" value="ECO:0007669"/>
    <property type="project" value="UniProtKB-UniRule"/>
</dbReference>
<dbReference type="FunFam" id="1.10.8.50:FF:000001">
    <property type="entry name" value="30S ribosomal protein S13"/>
    <property type="match status" value="1"/>
</dbReference>
<dbReference type="FunFam" id="4.10.910.10:FF:000001">
    <property type="entry name" value="30S ribosomal protein S13"/>
    <property type="match status" value="1"/>
</dbReference>
<dbReference type="Gene3D" id="1.10.8.50">
    <property type="match status" value="1"/>
</dbReference>
<dbReference type="Gene3D" id="4.10.910.10">
    <property type="entry name" value="30s ribosomal protein s13, domain 2"/>
    <property type="match status" value="1"/>
</dbReference>
<dbReference type="HAMAP" id="MF_01315">
    <property type="entry name" value="Ribosomal_uS13"/>
    <property type="match status" value="1"/>
</dbReference>
<dbReference type="InterPro" id="IPR027437">
    <property type="entry name" value="Rbsml_uS13_C"/>
</dbReference>
<dbReference type="InterPro" id="IPR001892">
    <property type="entry name" value="Ribosomal_uS13"/>
</dbReference>
<dbReference type="InterPro" id="IPR010979">
    <property type="entry name" value="Ribosomal_uS13-like_H2TH"/>
</dbReference>
<dbReference type="InterPro" id="IPR019980">
    <property type="entry name" value="Ribosomal_uS13_bac-type"/>
</dbReference>
<dbReference type="InterPro" id="IPR018269">
    <property type="entry name" value="Ribosomal_uS13_CS"/>
</dbReference>
<dbReference type="NCBIfam" id="TIGR03631">
    <property type="entry name" value="uS13_bact"/>
    <property type="match status" value="1"/>
</dbReference>
<dbReference type="PANTHER" id="PTHR10871">
    <property type="entry name" value="30S RIBOSOMAL PROTEIN S13/40S RIBOSOMAL PROTEIN S18"/>
    <property type="match status" value="1"/>
</dbReference>
<dbReference type="PANTHER" id="PTHR10871:SF1">
    <property type="entry name" value="SMALL RIBOSOMAL SUBUNIT PROTEIN US13M"/>
    <property type="match status" value="1"/>
</dbReference>
<dbReference type="Pfam" id="PF00416">
    <property type="entry name" value="Ribosomal_S13"/>
    <property type="match status" value="1"/>
</dbReference>
<dbReference type="PIRSF" id="PIRSF002134">
    <property type="entry name" value="Ribosomal_S13"/>
    <property type="match status" value="1"/>
</dbReference>
<dbReference type="SUPFAM" id="SSF46946">
    <property type="entry name" value="S13-like H2TH domain"/>
    <property type="match status" value="1"/>
</dbReference>
<dbReference type="PROSITE" id="PS00646">
    <property type="entry name" value="RIBOSOMAL_S13_1"/>
    <property type="match status" value="1"/>
</dbReference>
<dbReference type="PROSITE" id="PS50159">
    <property type="entry name" value="RIBOSOMAL_S13_2"/>
    <property type="match status" value="1"/>
</dbReference>
<name>RS13_ACIET</name>
<proteinExistence type="inferred from homology"/>
<organism>
    <name type="scientific">Acidovorax ebreus (strain TPSY)</name>
    <name type="common">Diaphorobacter sp. (strain TPSY)</name>
    <dbReference type="NCBI Taxonomy" id="535289"/>
    <lineage>
        <taxon>Bacteria</taxon>
        <taxon>Pseudomonadati</taxon>
        <taxon>Pseudomonadota</taxon>
        <taxon>Betaproteobacteria</taxon>
        <taxon>Burkholderiales</taxon>
        <taxon>Comamonadaceae</taxon>
        <taxon>Diaphorobacter</taxon>
    </lineage>
</organism>
<gene>
    <name evidence="1" type="primary">rpsM</name>
    <name type="ordered locus">Dtpsy_0395</name>
</gene>